<protein>
    <recommendedName>
        <fullName evidence="1">1-(5-phosphoribosyl)-5-[(5-phosphoribosylamino)methylideneamino] imidazole-4-carboxamide isomerase</fullName>
        <ecNumber evidence="1">5.3.1.16</ecNumber>
    </recommendedName>
    <alternativeName>
        <fullName evidence="1">Phosphoribosylformimino-5-aminoimidazole carboxamide ribotide isomerase</fullName>
    </alternativeName>
</protein>
<dbReference type="EC" id="5.3.1.16" evidence="1"/>
<dbReference type="EMBL" id="BX572593">
    <property type="protein sequence ID" value="CAE25756.1"/>
    <property type="molecule type" value="Genomic_DNA"/>
</dbReference>
<dbReference type="RefSeq" id="WP_011155880.1">
    <property type="nucleotide sequence ID" value="NZ_CP116810.1"/>
</dbReference>
<dbReference type="SMR" id="P60582"/>
<dbReference type="STRING" id="258594.RPA0312"/>
<dbReference type="GeneID" id="66891322"/>
<dbReference type="eggNOG" id="COG0106">
    <property type="taxonomic scope" value="Bacteria"/>
</dbReference>
<dbReference type="HOGENOM" id="CLU_048577_1_1_5"/>
<dbReference type="PhylomeDB" id="P60582"/>
<dbReference type="UniPathway" id="UPA00031">
    <property type="reaction ID" value="UER00009"/>
</dbReference>
<dbReference type="GO" id="GO:0005737">
    <property type="term" value="C:cytoplasm"/>
    <property type="evidence" value="ECO:0007669"/>
    <property type="project" value="UniProtKB-SubCell"/>
</dbReference>
<dbReference type="GO" id="GO:0003949">
    <property type="term" value="F:1-(5-phosphoribosyl)-5-[(5-phosphoribosylamino)methylideneamino]imidazole-4-carboxamide isomerase activity"/>
    <property type="evidence" value="ECO:0007669"/>
    <property type="project" value="UniProtKB-UniRule"/>
</dbReference>
<dbReference type="GO" id="GO:0000105">
    <property type="term" value="P:L-histidine biosynthetic process"/>
    <property type="evidence" value="ECO:0007669"/>
    <property type="project" value="UniProtKB-UniRule"/>
</dbReference>
<dbReference type="GO" id="GO:0000162">
    <property type="term" value="P:L-tryptophan biosynthetic process"/>
    <property type="evidence" value="ECO:0007669"/>
    <property type="project" value="TreeGrafter"/>
</dbReference>
<dbReference type="CDD" id="cd04732">
    <property type="entry name" value="HisA"/>
    <property type="match status" value="1"/>
</dbReference>
<dbReference type="FunFam" id="3.20.20.70:FF:000009">
    <property type="entry name" value="1-(5-phosphoribosyl)-5-[(5-phosphoribosylamino)methylideneamino] imidazole-4-carboxamide isomerase"/>
    <property type="match status" value="1"/>
</dbReference>
<dbReference type="Gene3D" id="3.20.20.70">
    <property type="entry name" value="Aldolase class I"/>
    <property type="match status" value="1"/>
</dbReference>
<dbReference type="HAMAP" id="MF_01014">
    <property type="entry name" value="HisA"/>
    <property type="match status" value="1"/>
</dbReference>
<dbReference type="InterPro" id="IPR013785">
    <property type="entry name" value="Aldolase_TIM"/>
</dbReference>
<dbReference type="InterPro" id="IPR006062">
    <property type="entry name" value="His_biosynth"/>
</dbReference>
<dbReference type="InterPro" id="IPR006063">
    <property type="entry name" value="HisA_bact_arch"/>
</dbReference>
<dbReference type="InterPro" id="IPR044524">
    <property type="entry name" value="Isoase_HisA-like"/>
</dbReference>
<dbReference type="InterPro" id="IPR023016">
    <property type="entry name" value="Isoase_HisA-like_bact"/>
</dbReference>
<dbReference type="InterPro" id="IPR011060">
    <property type="entry name" value="RibuloseP-bd_barrel"/>
</dbReference>
<dbReference type="NCBIfam" id="TIGR00007">
    <property type="entry name" value="1-(5-phosphoribosyl)-5-[(5-phosphoribosylamino)methylideneamino]imidazole-4-carboxamide isomerase"/>
    <property type="match status" value="1"/>
</dbReference>
<dbReference type="NCBIfam" id="NF010112">
    <property type="entry name" value="PRK13585.1"/>
    <property type="match status" value="1"/>
</dbReference>
<dbReference type="PANTHER" id="PTHR43090">
    <property type="entry name" value="1-(5-PHOSPHORIBOSYL)-5-[(5-PHOSPHORIBOSYLAMINO)METHYLIDENEAMINO] IMIDAZOLE-4-CARBOXAMIDE ISOMERASE"/>
    <property type="match status" value="1"/>
</dbReference>
<dbReference type="PANTHER" id="PTHR43090:SF2">
    <property type="entry name" value="1-(5-PHOSPHORIBOSYL)-5-[(5-PHOSPHORIBOSYLAMINO)METHYLIDENEAMINO] IMIDAZOLE-4-CARBOXAMIDE ISOMERASE"/>
    <property type="match status" value="1"/>
</dbReference>
<dbReference type="Pfam" id="PF00977">
    <property type="entry name" value="His_biosynth"/>
    <property type="match status" value="1"/>
</dbReference>
<dbReference type="SUPFAM" id="SSF51366">
    <property type="entry name" value="Ribulose-phoshate binding barrel"/>
    <property type="match status" value="1"/>
</dbReference>
<feature type="chain" id="PRO_0000142046" description="1-(5-phosphoribosyl)-5-[(5-phosphoribosylamino)methylideneamino] imidazole-4-carboxamide isomerase">
    <location>
        <begin position="1"/>
        <end position="245"/>
    </location>
</feature>
<feature type="active site" description="Proton acceptor" evidence="1">
    <location>
        <position position="8"/>
    </location>
</feature>
<feature type="active site" description="Proton donor" evidence="1">
    <location>
        <position position="129"/>
    </location>
</feature>
<gene>
    <name evidence="1" type="primary">hisA</name>
    <name type="ordered locus">RPA0312</name>
</gene>
<proteinExistence type="inferred from homology"/>
<sequence length="245" mass="25514">MILFPAIDLKNGQCVRLEQGDMARATVFNLDPAAQAQSFAAQGFQYLHVVDLDGAFAGKPMNAQAVEAMLKVVSMPVQLGGGIRDLKTIEAWLSKGIARVIIGTAAVRDPALVKEAAKAFPGRVAVGLDARDGNVAVEGWAESSQVTALDIAQRFEDAGVAAIIFTDIARDGLLKGINWDATIALAEAISIPVIASGGLASIEDVRTLLSPRAKKLEGAIAGRALYDGRLDPTEALALIGAAKAA</sequence>
<reference key="1">
    <citation type="journal article" date="2004" name="Nat. Biotechnol.">
        <title>Complete genome sequence of the metabolically versatile photosynthetic bacterium Rhodopseudomonas palustris.</title>
        <authorList>
            <person name="Larimer F.W."/>
            <person name="Chain P."/>
            <person name="Hauser L."/>
            <person name="Lamerdin J.E."/>
            <person name="Malfatti S."/>
            <person name="Do L."/>
            <person name="Land M.L."/>
            <person name="Pelletier D.A."/>
            <person name="Beatty J.T."/>
            <person name="Lang A.S."/>
            <person name="Tabita F.R."/>
            <person name="Gibson J.L."/>
            <person name="Hanson T.E."/>
            <person name="Bobst C."/>
            <person name="Torres y Torres J.L."/>
            <person name="Peres C."/>
            <person name="Harrison F.H."/>
            <person name="Gibson J."/>
            <person name="Harwood C.S."/>
        </authorList>
    </citation>
    <scope>NUCLEOTIDE SEQUENCE [LARGE SCALE GENOMIC DNA]</scope>
    <source>
        <strain>ATCC BAA-98 / CGA009</strain>
    </source>
</reference>
<organism>
    <name type="scientific">Rhodopseudomonas palustris (strain ATCC BAA-98 / CGA009)</name>
    <dbReference type="NCBI Taxonomy" id="258594"/>
    <lineage>
        <taxon>Bacteria</taxon>
        <taxon>Pseudomonadati</taxon>
        <taxon>Pseudomonadota</taxon>
        <taxon>Alphaproteobacteria</taxon>
        <taxon>Hyphomicrobiales</taxon>
        <taxon>Nitrobacteraceae</taxon>
        <taxon>Rhodopseudomonas</taxon>
    </lineage>
</organism>
<evidence type="ECO:0000255" key="1">
    <source>
        <dbReference type="HAMAP-Rule" id="MF_01014"/>
    </source>
</evidence>
<keyword id="KW-0028">Amino-acid biosynthesis</keyword>
<keyword id="KW-0963">Cytoplasm</keyword>
<keyword id="KW-0368">Histidine biosynthesis</keyword>
<keyword id="KW-0413">Isomerase</keyword>
<accession>P60582</accession>
<name>HIS4_RHOPA</name>
<comment type="catalytic activity">
    <reaction evidence="1">
        <text>1-(5-phospho-beta-D-ribosyl)-5-[(5-phospho-beta-D-ribosylamino)methylideneamino]imidazole-4-carboxamide = 5-[(5-phospho-1-deoxy-D-ribulos-1-ylimino)methylamino]-1-(5-phospho-beta-D-ribosyl)imidazole-4-carboxamide</text>
        <dbReference type="Rhea" id="RHEA:15469"/>
        <dbReference type="ChEBI" id="CHEBI:58435"/>
        <dbReference type="ChEBI" id="CHEBI:58525"/>
        <dbReference type="EC" id="5.3.1.16"/>
    </reaction>
</comment>
<comment type="pathway">
    <text evidence="1">Amino-acid biosynthesis; L-histidine biosynthesis; L-histidine from 5-phospho-alpha-D-ribose 1-diphosphate: step 4/9.</text>
</comment>
<comment type="subcellular location">
    <subcellularLocation>
        <location evidence="1">Cytoplasm</location>
    </subcellularLocation>
</comment>
<comment type="similarity">
    <text evidence="1">Belongs to the HisA/HisF family.</text>
</comment>